<protein>
    <recommendedName>
        <fullName evidence="10">Dolichyl-phosphate-mannose--protein mannosyltransferase 6</fullName>
        <ecNumber evidence="1 7 9">2.4.1.109</ecNumber>
    </recommendedName>
</protein>
<feature type="initiator methionine" description="Removed" evidence="12">
    <location>
        <position position="1"/>
    </location>
</feature>
<feature type="chain" id="PRO_0000121496" description="Dolichyl-phosphate-mannose--protein mannosyltransferase 6">
    <location>
        <begin position="2"/>
        <end position="759"/>
    </location>
</feature>
<feature type="topological domain" description="Cytoplasmic" evidence="2">
    <location>
        <begin position="2"/>
        <end position="58"/>
    </location>
</feature>
<feature type="transmembrane region" description="Helical" evidence="2">
    <location>
        <begin position="59"/>
        <end position="79"/>
    </location>
</feature>
<feature type="topological domain" description="Lumenal" evidence="2">
    <location>
        <begin position="80"/>
        <end position="164"/>
    </location>
</feature>
<feature type="transmembrane region" description="Helical" evidence="2">
    <location>
        <begin position="165"/>
        <end position="185"/>
    </location>
</feature>
<feature type="topological domain" description="Cytoplasmic" evidence="2">
    <location>
        <begin position="186"/>
        <end position="194"/>
    </location>
</feature>
<feature type="transmembrane region" description="Helical" evidence="2">
    <location>
        <begin position="195"/>
        <end position="215"/>
    </location>
</feature>
<feature type="topological domain" description="Lumenal" evidence="2">
    <location>
        <begin position="216"/>
        <end position="251"/>
    </location>
</feature>
<feature type="transmembrane region" description="Helical" evidence="2">
    <location>
        <begin position="252"/>
        <end position="272"/>
    </location>
</feature>
<feature type="topological domain" description="Cytoplasmic" evidence="2">
    <location>
        <begin position="273"/>
        <end position="293"/>
    </location>
</feature>
<feature type="transmembrane region" description="Helical" evidence="2">
    <location>
        <begin position="294"/>
        <end position="314"/>
    </location>
</feature>
<feature type="topological domain" description="Lumenal" evidence="2">
    <location>
        <begin position="315"/>
        <end position="618"/>
    </location>
</feature>
<feature type="transmembrane region" description="Helical" evidence="2">
    <location>
        <begin position="619"/>
        <end position="639"/>
    </location>
</feature>
<feature type="topological domain" description="Cytoplasmic" evidence="2">
    <location>
        <begin position="640"/>
        <end position="656"/>
    </location>
</feature>
<feature type="transmembrane region" description="Helical" evidence="2">
    <location>
        <begin position="657"/>
        <end position="677"/>
    </location>
</feature>
<feature type="topological domain" description="Lumenal" evidence="2">
    <location>
        <begin position="678"/>
        <end position="686"/>
    </location>
</feature>
<feature type="transmembrane region" description="Helical" evidence="2">
    <location>
        <begin position="687"/>
        <end position="707"/>
    </location>
</feature>
<feature type="topological domain" description="Cytoplasmic" evidence="2">
    <location>
        <begin position="708"/>
        <end position="715"/>
    </location>
</feature>
<feature type="transmembrane region" description="Helical" evidence="2">
    <location>
        <begin position="716"/>
        <end position="736"/>
    </location>
</feature>
<feature type="topological domain" description="Lumenal" evidence="2">
    <location>
        <begin position="737"/>
        <end position="759"/>
    </location>
</feature>
<feature type="domain" description="MIR 1" evidence="3">
    <location>
        <begin position="340"/>
        <end position="394"/>
    </location>
</feature>
<feature type="domain" description="MIR 2" evidence="3">
    <location>
        <begin position="409"/>
        <end position="467"/>
    </location>
</feature>
<feature type="domain" description="MIR 3" evidence="3">
    <location>
        <begin position="482"/>
        <end position="540"/>
    </location>
</feature>
<feature type="region of interest" description="Disordered" evidence="4">
    <location>
        <begin position="1"/>
        <end position="31"/>
    </location>
</feature>
<feature type="modified residue" description="N-acetylserine" evidence="12">
    <location>
        <position position="2"/>
    </location>
</feature>
<feature type="glycosylation site" description="N-linked (GlcNAc...) asparagine" evidence="2">
    <location>
        <position position="156"/>
    </location>
</feature>
<feature type="glycosylation site" description="N-linked (GlcNAc...) asparagine" evidence="2">
    <location>
        <position position="404"/>
    </location>
</feature>
<feature type="glycosylation site" description="N-linked (GlcNAc...) asparagine" evidence="2">
    <location>
        <position position="481"/>
    </location>
</feature>
<keyword id="KW-0007">Acetylation</keyword>
<keyword id="KW-0256">Endoplasmic reticulum</keyword>
<keyword id="KW-0325">Glycoprotein</keyword>
<keyword id="KW-0328">Glycosyltransferase</keyword>
<keyword id="KW-0472">Membrane</keyword>
<keyword id="KW-1185">Reference proteome</keyword>
<keyword id="KW-0677">Repeat</keyword>
<keyword id="KW-0808">Transferase</keyword>
<keyword id="KW-0812">Transmembrane</keyword>
<keyword id="KW-1133">Transmembrane helix</keyword>
<dbReference type="EC" id="2.4.1.109" evidence="1 7 9"/>
<dbReference type="EMBL" id="Z49133">
    <property type="protein sequence ID" value="CAA88992.1"/>
    <property type="molecule type" value="Genomic_DNA"/>
</dbReference>
<dbReference type="EMBL" id="Z72984">
    <property type="protein sequence ID" value="CAA97226.1"/>
    <property type="molecule type" value="Genomic_DNA"/>
</dbReference>
<dbReference type="EMBL" id="BK006941">
    <property type="protein sequence ID" value="DAA08292.1"/>
    <property type="molecule type" value="Genomic_DNA"/>
</dbReference>
<dbReference type="PIR" id="S53922">
    <property type="entry name" value="S53922"/>
</dbReference>
<dbReference type="RefSeq" id="NP_011715.1">
    <property type="nucleotide sequence ID" value="NM_001181328.1"/>
</dbReference>
<dbReference type="SMR" id="P42934"/>
<dbReference type="BioGRID" id="33452">
    <property type="interactions" value="95"/>
</dbReference>
<dbReference type="DIP" id="DIP-5551N"/>
<dbReference type="FunCoup" id="P42934">
    <property type="interactions" value="1130"/>
</dbReference>
<dbReference type="IntAct" id="P42934">
    <property type="interactions" value="2"/>
</dbReference>
<dbReference type="MINT" id="P42934"/>
<dbReference type="STRING" id="4932.YGR199W"/>
<dbReference type="CAZy" id="GT39">
    <property type="family name" value="Glycosyltransferase Family 39"/>
</dbReference>
<dbReference type="GlyCosmos" id="P42934">
    <property type="glycosylation" value="3 sites, No reported glycans"/>
</dbReference>
<dbReference type="GlyGen" id="P42934">
    <property type="glycosylation" value="3 sites"/>
</dbReference>
<dbReference type="iPTMnet" id="P42934"/>
<dbReference type="PaxDb" id="4932-YGR199W"/>
<dbReference type="PeptideAtlas" id="P42934"/>
<dbReference type="EnsemblFungi" id="YGR199W_mRNA">
    <property type="protein sequence ID" value="YGR199W"/>
    <property type="gene ID" value="YGR199W"/>
</dbReference>
<dbReference type="GeneID" id="853113"/>
<dbReference type="KEGG" id="sce:YGR199W"/>
<dbReference type="AGR" id="SGD:S000003431"/>
<dbReference type="SGD" id="S000003431">
    <property type="gene designation" value="PMT6"/>
</dbReference>
<dbReference type="VEuPathDB" id="FungiDB:YGR199W"/>
<dbReference type="eggNOG" id="KOG3359">
    <property type="taxonomic scope" value="Eukaryota"/>
</dbReference>
<dbReference type="HOGENOM" id="CLU_008438_5_0_1"/>
<dbReference type="InParanoid" id="P42934"/>
<dbReference type="OMA" id="GSPFNTW"/>
<dbReference type="OrthoDB" id="292747at2759"/>
<dbReference type="BioCyc" id="YEAST:YGR199W-MONOMER"/>
<dbReference type="BRENDA" id="2.4.1.109">
    <property type="organism ID" value="984"/>
</dbReference>
<dbReference type="UniPathway" id="UPA00378"/>
<dbReference type="BioGRID-ORCS" id="853113">
    <property type="hits" value="1 hit in 10 CRISPR screens"/>
</dbReference>
<dbReference type="PRO" id="PR:P42934"/>
<dbReference type="Proteomes" id="UP000002311">
    <property type="component" value="Chromosome VII"/>
</dbReference>
<dbReference type="RNAct" id="P42934">
    <property type="molecule type" value="protein"/>
</dbReference>
<dbReference type="GO" id="GO:0005783">
    <property type="term" value="C:endoplasmic reticulum"/>
    <property type="evidence" value="ECO:0007005"/>
    <property type="project" value="SGD"/>
</dbReference>
<dbReference type="GO" id="GO:0005789">
    <property type="term" value="C:endoplasmic reticulum membrane"/>
    <property type="evidence" value="ECO:0007669"/>
    <property type="project" value="UniProtKB-SubCell"/>
</dbReference>
<dbReference type="GO" id="GO:0004169">
    <property type="term" value="F:dolichyl-phosphate-mannose-protein mannosyltransferase activity"/>
    <property type="evidence" value="ECO:0000247"/>
    <property type="project" value="SGD"/>
</dbReference>
<dbReference type="GO" id="GO:0006493">
    <property type="term" value="P:protein O-linked glycosylation"/>
    <property type="evidence" value="ECO:0000315"/>
    <property type="project" value="SGD"/>
</dbReference>
<dbReference type="GO" id="GO:0035269">
    <property type="term" value="P:protein O-linked mannosylation"/>
    <property type="evidence" value="ECO:0000315"/>
    <property type="project" value="SGD"/>
</dbReference>
<dbReference type="CDD" id="cd23284">
    <property type="entry name" value="beta-trefoil_MIR_PMT2-like"/>
    <property type="match status" value="1"/>
</dbReference>
<dbReference type="FunFam" id="2.80.10.50:FF:000080">
    <property type="entry name" value="Dolichyl-phosphate-mannose-protein mannosyltransferase 6"/>
    <property type="match status" value="1"/>
</dbReference>
<dbReference type="Gene3D" id="2.80.10.50">
    <property type="match status" value="1"/>
</dbReference>
<dbReference type="InterPro" id="IPR027005">
    <property type="entry name" value="GlyclTrfase_39-like"/>
</dbReference>
<dbReference type="InterPro" id="IPR003342">
    <property type="entry name" value="Glyco_trans_39/83"/>
</dbReference>
<dbReference type="InterPro" id="IPR036300">
    <property type="entry name" value="MIR_dom_sf"/>
</dbReference>
<dbReference type="InterPro" id="IPR016093">
    <property type="entry name" value="MIR_motif"/>
</dbReference>
<dbReference type="InterPro" id="IPR032421">
    <property type="entry name" value="PMT_4TMC"/>
</dbReference>
<dbReference type="PANTHER" id="PTHR10050">
    <property type="entry name" value="DOLICHYL-PHOSPHATE-MANNOSE--PROTEIN MANNOSYLTRANSFERASE"/>
    <property type="match status" value="1"/>
</dbReference>
<dbReference type="PANTHER" id="PTHR10050:SF52">
    <property type="entry name" value="DOLICHYL-PHOSPHATE-MANNOSE--PROTEIN MANNOSYLTRANSFERASE 6"/>
    <property type="match status" value="1"/>
</dbReference>
<dbReference type="Pfam" id="PF02815">
    <property type="entry name" value="MIR"/>
    <property type="match status" value="1"/>
</dbReference>
<dbReference type="Pfam" id="PF02366">
    <property type="entry name" value="PMT"/>
    <property type="match status" value="1"/>
</dbReference>
<dbReference type="Pfam" id="PF16192">
    <property type="entry name" value="PMT_4TMC"/>
    <property type="match status" value="1"/>
</dbReference>
<dbReference type="SMART" id="SM00472">
    <property type="entry name" value="MIR"/>
    <property type="match status" value="3"/>
</dbReference>
<dbReference type="SUPFAM" id="SSF82109">
    <property type="entry name" value="MIR domain"/>
    <property type="match status" value="1"/>
</dbReference>
<dbReference type="PROSITE" id="PS50919">
    <property type="entry name" value="MIR"/>
    <property type="match status" value="3"/>
</dbReference>
<gene>
    <name evidence="11" type="primary">PMT6</name>
    <name evidence="11" type="ordered locus">YGR199W</name>
    <name evidence="8" type="ORF">G7722</name>
</gene>
<proteinExistence type="evidence at protein level"/>
<sequence length="759" mass="88026">MSKAKGTGFSSIDTEDENLRERYVNQPKANASDIQDEQLDCFEQLEEKHRTKKNEEYTALKILRDVIGPLLLTITSFYLRFQHIDQNNYVVWDEAHFGKFGSYYIKHEYYHDVHPPLGKMLIALSEWMAGFDGQFDFSSNNAYPENVNFKLMRQFNATFGALCTPVAFFTAKWMGFNYFTVYLIATMVTLEHSYIVLSKFILLDSMLLFFSMTTFACMIKLYTLRKQQMTKKWSLWMLLTGLSIGCVCSVKWVGLFITVVVGLYTCIELFLLYCDKELPRIKYYKHWLIRIINLIVIPFLIYLYCFKIHFVLLYKSGTGDSTTNTLFQINLEGTQIEAGPRDVAFGSELTIRSHGLSPNLLHSHIQVYPEGSGQRQITGYGFADSNNVWKFEFSRSSGLELDQNGTLNGKIIPITDGVEVRLSHKNTGSNLHSHDVPSHVSRGNYEVSGYGSQSVGDEKDDWIVEIVKQMDSPNPVYSNENSTILHPVSTFFRLRHKVLGCYLASTGLTYPAWGFKQAEIVCKDSWSRRDKSTWWNVEDHWNHNLETAEDYVPPKSNFWTDFILTNFAMASSNNALVPDEDKYDSLSSDAWEWPTLHKGLRMCSWAGYITRYYLMGSPFNTWISTVSLIIFPFIILFILYRWRRQTLYLSDDQIWQITIQGIFPFISWMTHYLPFAMMGRVTYVHHYVPALYFAMLVFGFVLDFTLTRVHWMVKYPIYLSLFGGCIYIYNLFAPICQGMHGDKAEYLPLQWLSTWDIAP</sequence>
<organism>
    <name type="scientific">Saccharomyces cerevisiae (strain ATCC 204508 / S288c)</name>
    <name type="common">Baker's yeast</name>
    <dbReference type="NCBI Taxonomy" id="559292"/>
    <lineage>
        <taxon>Eukaryota</taxon>
        <taxon>Fungi</taxon>
        <taxon>Dikarya</taxon>
        <taxon>Ascomycota</taxon>
        <taxon>Saccharomycotina</taxon>
        <taxon>Saccharomycetes</taxon>
        <taxon>Saccharomycetales</taxon>
        <taxon>Saccharomycetaceae</taxon>
        <taxon>Saccharomyces</taxon>
    </lineage>
</organism>
<accession>P42934</accession>
<accession>D6VUY1</accession>
<reference key="1">
    <citation type="journal article" date="1996" name="Yeast">
        <title>Sequencing of a 17.6 kb segment on the right arm of yeast chromosome VII reveals 12 ORFs, including CCT, ADE3 and TR-I genes, homologues of the yeast PMT and EF1G genes, of the human and bacterial electron-transferring flavoproteins (beta-chain) and of the Escherichia coli phosphoserine phosphohydrolase, and five new ORFs.</title>
        <authorList>
            <person name="Guerreiro P."/>
            <person name="Barreiros T."/>
            <person name="Soares H."/>
            <person name="Cyrne L."/>
            <person name="Maia e Silva A."/>
            <person name="Rodrigues-Pousada C."/>
        </authorList>
    </citation>
    <scope>NUCLEOTIDE SEQUENCE [GENOMIC DNA]</scope>
    <source>
        <strain>ATCC 204508 / S288c</strain>
    </source>
</reference>
<reference key="2">
    <citation type="journal article" date="1997" name="Nature">
        <title>The nucleotide sequence of Saccharomyces cerevisiae chromosome VII.</title>
        <authorList>
            <person name="Tettelin H."/>
            <person name="Agostoni-Carbone M.L."/>
            <person name="Albermann K."/>
            <person name="Albers M."/>
            <person name="Arroyo J."/>
            <person name="Backes U."/>
            <person name="Barreiros T."/>
            <person name="Bertani I."/>
            <person name="Bjourson A.J."/>
            <person name="Brueckner M."/>
            <person name="Bruschi C.V."/>
            <person name="Carignani G."/>
            <person name="Castagnoli L."/>
            <person name="Cerdan E."/>
            <person name="Clemente M.L."/>
            <person name="Coblenz A."/>
            <person name="Coglievina M."/>
            <person name="Coissac E."/>
            <person name="Defoor E."/>
            <person name="Del Bino S."/>
            <person name="Delius H."/>
            <person name="Delneri D."/>
            <person name="de Wergifosse P."/>
            <person name="Dujon B."/>
            <person name="Durand P."/>
            <person name="Entian K.-D."/>
            <person name="Eraso P."/>
            <person name="Escribano V."/>
            <person name="Fabiani L."/>
            <person name="Fartmann B."/>
            <person name="Feroli F."/>
            <person name="Feuermann M."/>
            <person name="Frontali L."/>
            <person name="Garcia-Gonzalez M."/>
            <person name="Garcia-Saez M.I."/>
            <person name="Goffeau A."/>
            <person name="Guerreiro P."/>
            <person name="Hani J."/>
            <person name="Hansen M."/>
            <person name="Hebling U."/>
            <person name="Hernandez K."/>
            <person name="Heumann K."/>
            <person name="Hilger F."/>
            <person name="Hofmann B."/>
            <person name="Indge K.J."/>
            <person name="James C.M."/>
            <person name="Klima R."/>
            <person name="Koetter P."/>
            <person name="Kramer B."/>
            <person name="Kramer W."/>
            <person name="Lauquin G."/>
            <person name="Leuther H."/>
            <person name="Louis E.J."/>
            <person name="Maillier E."/>
            <person name="Marconi A."/>
            <person name="Martegani E."/>
            <person name="Mazon M.J."/>
            <person name="Mazzoni C."/>
            <person name="McReynolds A.D.K."/>
            <person name="Melchioretto P."/>
            <person name="Mewes H.-W."/>
            <person name="Minenkova O."/>
            <person name="Mueller-Auer S."/>
            <person name="Nawrocki A."/>
            <person name="Netter P."/>
            <person name="Neu R."/>
            <person name="Nombela C."/>
            <person name="Oliver S.G."/>
            <person name="Panzeri L."/>
            <person name="Paoluzi S."/>
            <person name="Plevani P."/>
            <person name="Portetelle D."/>
            <person name="Portillo F."/>
            <person name="Potier S."/>
            <person name="Purnelle B."/>
            <person name="Rieger M."/>
            <person name="Riles L."/>
            <person name="Rinaldi T."/>
            <person name="Robben J."/>
            <person name="Rodrigues-Pousada C."/>
            <person name="Rodriguez-Belmonte E."/>
            <person name="Rodriguez-Torres A.M."/>
            <person name="Rose M."/>
            <person name="Ruzzi M."/>
            <person name="Saliola M."/>
            <person name="Sanchez-Perez M."/>
            <person name="Schaefer B."/>
            <person name="Schaefer M."/>
            <person name="Scharfe M."/>
            <person name="Schmidheini T."/>
            <person name="Schreer A."/>
            <person name="Skala J."/>
            <person name="Souciet J.-L."/>
            <person name="Steensma H.Y."/>
            <person name="Talla E."/>
            <person name="Thierry A."/>
            <person name="Vandenbol M."/>
            <person name="van der Aart Q.J.M."/>
            <person name="Van Dyck L."/>
            <person name="Vanoni M."/>
            <person name="Verhasselt P."/>
            <person name="Voet M."/>
            <person name="Volckaert G."/>
            <person name="Wambutt R."/>
            <person name="Watson M.D."/>
            <person name="Weber N."/>
            <person name="Wedler E."/>
            <person name="Wedler H."/>
            <person name="Wipfli P."/>
            <person name="Wolf K."/>
            <person name="Wright L.F."/>
            <person name="Zaccaria P."/>
            <person name="Zimmermann M."/>
            <person name="Zollner A."/>
            <person name="Kleine K."/>
        </authorList>
    </citation>
    <scope>NUCLEOTIDE SEQUENCE [LARGE SCALE GENOMIC DNA]</scope>
    <source>
        <strain>ATCC 204508 / S288c</strain>
    </source>
</reference>
<reference key="3">
    <citation type="journal article" date="2014" name="G3 (Bethesda)">
        <title>The reference genome sequence of Saccharomyces cerevisiae: Then and now.</title>
        <authorList>
            <person name="Engel S.R."/>
            <person name="Dietrich F.S."/>
            <person name="Fisk D.G."/>
            <person name="Binkley G."/>
            <person name="Balakrishnan R."/>
            <person name="Costanzo M.C."/>
            <person name="Dwight S.S."/>
            <person name="Hitz B.C."/>
            <person name="Karra K."/>
            <person name="Nash R.S."/>
            <person name="Weng S."/>
            <person name="Wong E.D."/>
            <person name="Lloyd P."/>
            <person name="Skrzypek M.S."/>
            <person name="Miyasato S.R."/>
            <person name="Simison M."/>
            <person name="Cherry J.M."/>
        </authorList>
    </citation>
    <scope>GENOME REANNOTATION</scope>
    <source>
        <strain>ATCC 204508 / S288c</strain>
    </source>
</reference>
<reference key="4">
    <citation type="journal article" date="1997" name="Glycobiology">
        <title>Protein-O-glycosylation in yeast: protein-specific mannosyltransferases.</title>
        <authorList>
            <person name="Gentzsch M."/>
            <person name="Tanner W."/>
        </authorList>
    </citation>
    <scope>DISRUPTION PHENOTYPE</scope>
    <scope>SUBUNIT</scope>
</reference>
<reference key="5">
    <citation type="journal article" date="2006" name="Proc. Natl. Acad. Sci. U.S.A.">
        <title>A global topology map of the Saccharomyces cerevisiae membrane proteome.</title>
        <authorList>
            <person name="Kim H."/>
            <person name="Melen K."/>
            <person name="Oesterberg M."/>
            <person name="von Heijne G."/>
        </authorList>
    </citation>
    <scope>TOPOLOGY [LARGE SCALE ANALYSIS]</scope>
    <source>
        <strain>ATCC 208353 / W303-1A</strain>
    </source>
</reference>
<reference key="6">
    <citation type="journal article" date="2008" name="J. Biochem.">
        <title>O-mannosylation is required for degradation of the endoplasmic reticulum-associated degradation substrate Gas1*p via the ubiquitin/proteasome pathway in Saccharomyces cerevisiae.</title>
        <authorList>
            <person name="Hirayama H."/>
            <person name="Fujita M."/>
            <person name="Yoko-o T."/>
            <person name="Jigami Y."/>
        </authorList>
    </citation>
    <scope>DISRUPTION PHENOTYPE</scope>
</reference>
<reference key="7">
    <citation type="journal article" date="2012" name="Proc. Natl. Acad. Sci. U.S.A.">
        <title>N-terminal acetylome analyses and functional insights of the N-terminal acetyltransferase NatB.</title>
        <authorList>
            <person name="Van Damme P."/>
            <person name="Lasa M."/>
            <person name="Polevoda B."/>
            <person name="Gazquez C."/>
            <person name="Elosegui-Artola A."/>
            <person name="Kim D.S."/>
            <person name="De Juan-Pardo E."/>
            <person name="Demeyer K."/>
            <person name="Hole K."/>
            <person name="Larrea E."/>
            <person name="Timmerman E."/>
            <person name="Prieto J."/>
            <person name="Arnesen T."/>
            <person name="Sherman F."/>
            <person name="Gevaert K."/>
            <person name="Aldabe R."/>
        </authorList>
    </citation>
    <scope>ACETYLATION [LARGE SCALE ANALYSIS] AT SER-2</scope>
    <scope>CLEAVAGE OF INITIATOR METHIONINE [LARGE SCALE ANALYSIS]</scope>
    <scope>IDENTIFICATION BY MASS SPECTROMETRY [LARGE SCALE ANALYSIS]</scope>
</reference>
<evidence type="ECO:0000250" key="1">
    <source>
        <dbReference type="UniProtKB" id="P33775"/>
    </source>
</evidence>
<evidence type="ECO:0000255" key="2"/>
<evidence type="ECO:0000255" key="3">
    <source>
        <dbReference type="PROSITE-ProRule" id="PRU00131"/>
    </source>
</evidence>
<evidence type="ECO:0000256" key="4">
    <source>
        <dbReference type="SAM" id="MobiDB-lite"/>
    </source>
</evidence>
<evidence type="ECO:0000269" key="5">
    <source>
    </source>
</evidence>
<evidence type="ECO:0000269" key="6">
    <source>
    </source>
</evidence>
<evidence type="ECO:0000303" key="7">
    <source>
    </source>
</evidence>
<evidence type="ECO:0000303" key="8">
    <source>
    </source>
</evidence>
<evidence type="ECO:0000303" key="9">
    <source>
    </source>
</evidence>
<evidence type="ECO:0000305" key="10"/>
<evidence type="ECO:0000312" key="11">
    <source>
        <dbReference type="SGD" id="S000003431"/>
    </source>
</evidence>
<evidence type="ECO:0007744" key="12">
    <source>
    </source>
</evidence>
<name>PMT6_YEAST</name>
<comment type="function">
    <text evidence="1 7 9">Protein O-mannosyltransferase involved in O-glycosylation which is essential for cell wall rigidity. Transfers mannose from Dol-P-mannose to Ser or Thr residues on proteins.</text>
</comment>
<comment type="catalytic activity">
    <reaction evidence="1 7 9">
        <text>a di-trans,poly-cis-dolichyl beta-D-mannosyl phosphate + L-seryl-[protein] = 3-O-(alpha-D-mannosyl)-L-seryl-[protein] + a di-trans,poly-cis-dolichyl phosphate + H(+)</text>
        <dbReference type="Rhea" id="RHEA:17377"/>
        <dbReference type="Rhea" id="RHEA-COMP:9863"/>
        <dbReference type="Rhea" id="RHEA-COMP:13546"/>
        <dbReference type="Rhea" id="RHEA-COMP:19498"/>
        <dbReference type="Rhea" id="RHEA-COMP:19501"/>
        <dbReference type="ChEBI" id="CHEBI:15378"/>
        <dbReference type="ChEBI" id="CHEBI:29999"/>
        <dbReference type="ChEBI" id="CHEBI:57683"/>
        <dbReference type="ChEBI" id="CHEBI:58211"/>
        <dbReference type="ChEBI" id="CHEBI:137321"/>
        <dbReference type="EC" id="2.4.1.109"/>
    </reaction>
</comment>
<comment type="catalytic activity">
    <reaction evidence="1 7 9">
        <text>a di-trans,poly-cis-dolichyl beta-D-mannosyl phosphate + L-threonyl-[protein] = 3-O-(alpha-D-mannosyl)-L-threonyl-[protein] + a di-trans,poly-cis-dolichyl phosphate + H(+)</text>
        <dbReference type="Rhea" id="RHEA:53396"/>
        <dbReference type="Rhea" id="RHEA-COMP:11060"/>
        <dbReference type="Rhea" id="RHEA-COMP:13547"/>
        <dbReference type="Rhea" id="RHEA-COMP:19498"/>
        <dbReference type="Rhea" id="RHEA-COMP:19501"/>
        <dbReference type="ChEBI" id="CHEBI:15378"/>
        <dbReference type="ChEBI" id="CHEBI:30013"/>
        <dbReference type="ChEBI" id="CHEBI:57683"/>
        <dbReference type="ChEBI" id="CHEBI:58211"/>
        <dbReference type="ChEBI" id="CHEBI:137323"/>
        <dbReference type="EC" id="2.4.1.109"/>
    </reaction>
</comment>
<comment type="pathway">
    <text evidence="10">Protein modification; protein glycosylation.</text>
</comment>
<comment type="subunit">
    <text evidence="9">May form a heterodimer with PMT4.</text>
</comment>
<comment type="subcellular location">
    <subcellularLocation>
        <location evidence="1">Endoplasmic reticulum membrane</location>
        <topology evidence="2">Multi-pass membrane protein</topology>
    </subcellularLocation>
</comment>
<comment type="disruption phenotype">
    <text evidence="5 6">Affects GAS1 and GGP1 O-mannosylation.</text>
</comment>
<comment type="similarity">
    <text evidence="10">Belongs to the glycosyltransferase 39 family.</text>
</comment>